<proteinExistence type="inferred from homology"/>
<evidence type="ECO:0000255" key="1">
    <source>
        <dbReference type="HAMAP-Rule" id="MF_01209"/>
    </source>
</evidence>
<gene>
    <name evidence="1" type="primary">carA</name>
    <name type="ordered locus">BruAb1_1478</name>
</gene>
<sequence>MTETTPKTAPWTVQKRTAVLVLADGTVIEGKGLGATGAVEAEVVFNTALTGYEEILTDPSYAGQIVTFTFPHIGNVGANAEDIEDLTPANRHGAVGAIFKADITAPSNFRAAKDLDSWLKHRGIIALAGIDTRALTALIRERGAQNAVIAHDPNGNFDLDALKARAANWCGLENLDLAKDVTIGQSLVWKELPWTLQDGYGEQDAPQYHVVALDFGVKRNILRLLTGLGAKVTVLPATATAEDVLAHNPDGVFLSNGPGDPAATGEYAVPTIGKLVETGIPLFGICLGHQMLALALGGRTEKMHQGHHGANHPVKDYTTGKVEIVSMNHGFAVDSDSLPENVEETHVSLFDGTNCGLRVVGKPVFSVQHHPEASPGPQDSHYLFRRFINLIRERKGQAPLPEREQAA</sequence>
<comment type="function">
    <text evidence="1">Small subunit of the glutamine-dependent carbamoyl phosphate synthetase (CPSase). CPSase catalyzes the formation of carbamoyl phosphate from the ammonia moiety of glutamine, carbonate, and phosphate donated by ATP, constituting the first step of 2 biosynthetic pathways, one leading to arginine and/or urea and the other to pyrimidine nucleotides. The small subunit (glutamine amidotransferase) binds and cleaves glutamine to supply the large subunit with the substrate ammonia.</text>
</comment>
<comment type="catalytic activity">
    <reaction evidence="1">
        <text>hydrogencarbonate + L-glutamine + 2 ATP + H2O = carbamoyl phosphate + L-glutamate + 2 ADP + phosphate + 2 H(+)</text>
        <dbReference type="Rhea" id="RHEA:18633"/>
        <dbReference type="ChEBI" id="CHEBI:15377"/>
        <dbReference type="ChEBI" id="CHEBI:15378"/>
        <dbReference type="ChEBI" id="CHEBI:17544"/>
        <dbReference type="ChEBI" id="CHEBI:29985"/>
        <dbReference type="ChEBI" id="CHEBI:30616"/>
        <dbReference type="ChEBI" id="CHEBI:43474"/>
        <dbReference type="ChEBI" id="CHEBI:58228"/>
        <dbReference type="ChEBI" id="CHEBI:58359"/>
        <dbReference type="ChEBI" id="CHEBI:456216"/>
        <dbReference type="EC" id="6.3.5.5"/>
    </reaction>
</comment>
<comment type="catalytic activity">
    <molecule>Carbamoyl phosphate synthase small chain</molecule>
    <reaction evidence="1">
        <text>L-glutamine + H2O = L-glutamate + NH4(+)</text>
        <dbReference type="Rhea" id="RHEA:15889"/>
        <dbReference type="ChEBI" id="CHEBI:15377"/>
        <dbReference type="ChEBI" id="CHEBI:28938"/>
        <dbReference type="ChEBI" id="CHEBI:29985"/>
        <dbReference type="ChEBI" id="CHEBI:58359"/>
    </reaction>
</comment>
<comment type="pathway">
    <text evidence="1">Amino-acid biosynthesis; L-arginine biosynthesis; carbamoyl phosphate from bicarbonate: step 1/1.</text>
</comment>
<comment type="pathway">
    <text evidence="1">Pyrimidine metabolism; UMP biosynthesis via de novo pathway; (S)-dihydroorotate from bicarbonate: step 1/3.</text>
</comment>
<comment type="subunit">
    <text evidence="1">Composed of two chains; the small (or glutamine) chain promotes the hydrolysis of glutamine to ammonia, which is used by the large (or ammonia) chain to synthesize carbamoyl phosphate. Tetramer of heterodimers (alpha,beta)4.</text>
</comment>
<comment type="similarity">
    <text evidence="1">Belongs to the CarA family.</text>
</comment>
<reference key="1">
    <citation type="journal article" date="2005" name="J. Bacteriol.">
        <title>Completion of the genome sequence of Brucella abortus and comparison to the highly similar genomes of Brucella melitensis and Brucella suis.</title>
        <authorList>
            <person name="Halling S.M."/>
            <person name="Peterson-Burch B.D."/>
            <person name="Bricker B.J."/>
            <person name="Zuerner R.L."/>
            <person name="Qing Z."/>
            <person name="Li L.-L."/>
            <person name="Kapur V."/>
            <person name="Alt D.P."/>
            <person name="Olsen S.C."/>
        </authorList>
    </citation>
    <scope>NUCLEOTIDE SEQUENCE [LARGE SCALE GENOMIC DNA]</scope>
    <source>
        <strain>9-941</strain>
    </source>
</reference>
<name>CARA_BRUAB</name>
<keyword id="KW-0028">Amino-acid biosynthesis</keyword>
<keyword id="KW-0055">Arginine biosynthesis</keyword>
<keyword id="KW-0067">ATP-binding</keyword>
<keyword id="KW-0315">Glutamine amidotransferase</keyword>
<keyword id="KW-0436">Ligase</keyword>
<keyword id="KW-0547">Nucleotide-binding</keyword>
<keyword id="KW-0665">Pyrimidine biosynthesis</keyword>
<protein>
    <recommendedName>
        <fullName evidence="1">Carbamoyl phosphate synthase small chain</fullName>
        <ecNumber evidence="1">6.3.5.5</ecNumber>
    </recommendedName>
    <alternativeName>
        <fullName evidence="1">Carbamoyl phosphate synthetase glutamine chain</fullName>
    </alternativeName>
</protein>
<dbReference type="EC" id="6.3.5.5" evidence="1"/>
<dbReference type="EMBL" id="AE017223">
    <property type="protein sequence ID" value="AAX74806.1"/>
    <property type="molecule type" value="Genomic_DNA"/>
</dbReference>
<dbReference type="RefSeq" id="WP_002964590.1">
    <property type="nucleotide sequence ID" value="NC_006932.1"/>
</dbReference>
<dbReference type="SMR" id="Q57C28"/>
<dbReference type="MEROPS" id="C26.954"/>
<dbReference type="EnsemblBacteria" id="AAX74806">
    <property type="protein sequence ID" value="AAX74806"/>
    <property type="gene ID" value="BruAb1_1478"/>
</dbReference>
<dbReference type="GeneID" id="93016227"/>
<dbReference type="KEGG" id="bmb:BruAb1_1478"/>
<dbReference type="HOGENOM" id="CLU_035901_2_2_5"/>
<dbReference type="UniPathway" id="UPA00068">
    <property type="reaction ID" value="UER00171"/>
</dbReference>
<dbReference type="UniPathway" id="UPA00070">
    <property type="reaction ID" value="UER00115"/>
</dbReference>
<dbReference type="Proteomes" id="UP000000540">
    <property type="component" value="Chromosome I"/>
</dbReference>
<dbReference type="GO" id="GO:0005524">
    <property type="term" value="F:ATP binding"/>
    <property type="evidence" value="ECO:0007669"/>
    <property type="project" value="UniProtKB-UniRule"/>
</dbReference>
<dbReference type="GO" id="GO:0004088">
    <property type="term" value="F:carbamoyl-phosphate synthase (glutamine-hydrolyzing) activity"/>
    <property type="evidence" value="ECO:0007669"/>
    <property type="project" value="UniProtKB-UniRule"/>
</dbReference>
<dbReference type="GO" id="GO:0004359">
    <property type="term" value="F:glutaminase activity"/>
    <property type="evidence" value="ECO:0007669"/>
    <property type="project" value="RHEA"/>
</dbReference>
<dbReference type="GO" id="GO:0006207">
    <property type="term" value="P:'de novo' pyrimidine nucleobase biosynthetic process"/>
    <property type="evidence" value="ECO:0007669"/>
    <property type="project" value="InterPro"/>
</dbReference>
<dbReference type="GO" id="GO:0044205">
    <property type="term" value="P:'de novo' UMP biosynthetic process"/>
    <property type="evidence" value="ECO:0007669"/>
    <property type="project" value="UniProtKB-UniRule"/>
</dbReference>
<dbReference type="GO" id="GO:0006541">
    <property type="term" value="P:glutamine metabolic process"/>
    <property type="evidence" value="ECO:0007669"/>
    <property type="project" value="InterPro"/>
</dbReference>
<dbReference type="GO" id="GO:0006526">
    <property type="term" value="P:L-arginine biosynthetic process"/>
    <property type="evidence" value="ECO:0007669"/>
    <property type="project" value="UniProtKB-UniRule"/>
</dbReference>
<dbReference type="CDD" id="cd01744">
    <property type="entry name" value="GATase1_CPSase"/>
    <property type="match status" value="1"/>
</dbReference>
<dbReference type="FunFam" id="3.50.30.20:FF:000001">
    <property type="entry name" value="Carbamoyl-phosphate synthase small chain"/>
    <property type="match status" value="1"/>
</dbReference>
<dbReference type="Gene3D" id="3.40.50.880">
    <property type="match status" value="1"/>
</dbReference>
<dbReference type="Gene3D" id="3.50.30.20">
    <property type="entry name" value="Carbamoyl-phosphate synthase small subunit, N-terminal domain"/>
    <property type="match status" value="1"/>
</dbReference>
<dbReference type="HAMAP" id="MF_01209">
    <property type="entry name" value="CPSase_S_chain"/>
    <property type="match status" value="1"/>
</dbReference>
<dbReference type="InterPro" id="IPR050472">
    <property type="entry name" value="Anth_synth/Amidotransfase"/>
</dbReference>
<dbReference type="InterPro" id="IPR006274">
    <property type="entry name" value="CarbamoylP_synth_ssu"/>
</dbReference>
<dbReference type="InterPro" id="IPR002474">
    <property type="entry name" value="CarbamoylP_synth_ssu_N"/>
</dbReference>
<dbReference type="InterPro" id="IPR036480">
    <property type="entry name" value="CarbP_synth_ssu_N_sf"/>
</dbReference>
<dbReference type="InterPro" id="IPR029062">
    <property type="entry name" value="Class_I_gatase-like"/>
</dbReference>
<dbReference type="InterPro" id="IPR035686">
    <property type="entry name" value="CPSase_GATase1"/>
</dbReference>
<dbReference type="InterPro" id="IPR017926">
    <property type="entry name" value="GATASE"/>
</dbReference>
<dbReference type="NCBIfam" id="TIGR01368">
    <property type="entry name" value="CPSaseIIsmall"/>
    <property type="match status" value="1"/>
</dbReference>
<dbReference type="NCBIfam" id="NF009475">
    <property type="entry name" value="PRK12838.1"/>
    <property type="match status" value="1"/>
</dbReference>
<dbReference type="PANTHER" id="PTHR43418:SF7">
    <property type="entry name" value="CARBAMOYL-PHOSPHATE SYNTHASE SMALL CHAIN"/>
    <property type="match status" value="1"/>
</dbReference>
<dbReference type="PANTHER" id="PTHR43418">
    <property type="entry name" value="MULTIFUNCTIONAL TRYPTOPHAN BIOSYNTHESIS PROTEIN-RELATED"/>
    <property type="match status" value="1"/>
</dbReference>
<dbReference type="Pfam" id="PF00988">
    <property type="entry name" value="CPSase_sm_chain"/>
    <property type="match status" value="1"/>
</dbReference>
<dbReference type="Pfam" id="PF00117">
    <property type="entry name" value="GATase"/>
    <property type="match status" value="1"/>
</dbReference>
<dbReference type="PRINTS" id="PR00097">
    <property type="entry name" value="ANTSNTHASEII"/>
</dbReference>
<dbReference type="PRINTS" id="PR00099">
    <property type="entry name" value="CPSGATASE"/>
</dbReference>
<dbReference type="PRINTS" id="PR00096">
    <property type="entry name" value="GATASE"/>
</dbReference>
<dbReference type="SMART" id="SM01097">
    <property type="entry name" value="CPSase_sm_chain"/>
    <property type="match status" value="1"/>
</dbReference>
<dbReference type="SUPFAM" id="SSF52021">
    <property type="entry name" value="Carbamoyl phosphate synthetase, small subunit N-terminal domain"/>
    <property type="match status" value="1"/>
</dbReference>
<dbReference type="SUPFAM" id="SSF52317">
    <property type="entry name" value="Class I glutamine amidotransferase-like"/>
    <property type="match status" value="1"/>
</dbReference>
<dbReference type="PROSITE" id="PS51273">
    <property type="entry name" value="GATASE_TYPE_1"/>
    <property type="match status" value="1"/>
</dbReference>
<accession>Q57C28</accession>
<organism>
    <name type="scientific">Brucella abortus biovar 1 (strain 9-941)</name>
    <dbReference type="NCBI Taxonomy" id="262698"/>
    <lineage>
        <taxon>Bacteria</taxon>
        <taxon>Pseudomonadati</taxon>
        <taxon>Pseudomonadota</taxon>
        <taxon>Alphaproteobacteria</taxon>
        <taxon>Hyphomicrobiales</taxon>
        <taxon>Brucellaceae</taxon>
        <taxon>Brucella/Ochrobactrum group</taxon>
        <taxon>Brucella</taxon>
    </lineage>
</organism>
<feature type="chain" id="PRO_1000138854" description="Carbamoyl phosphate synthase small chain">
    <location>
        <begin position="1"/>
        <end position="407"/>
    </location>
</feature>
<feature type="domain" description="Glutamine amidotransferase type-1" evidence="1">
    <location>
        <begin position="209"/>
        <end position="397"/>
    </location>
</feature>
<feature type="region of interest" description="CPSase" evidence="1">
    <location>
        <begin position="1"/>
        <end position="205"/>
    </location>
</feature>
<feature type="active site" description="Nucleophile" evidence="1">
    <location>
        <position position="286"/>
    </location>
</feature>
<feature type="active site" evidence="1">
    <location>
        <position position="370"/>
    </location>
</feature>
<feature type="active site" evidence="1">
    <location>
        <position position="372"/>
    </location>
</feature>
<feature type="binding site" evidence="1">
    <location>
        <position position="60"/>
    </location>
    <ligand>
        <name>L-glutamine</name>
        <dbReference type="ChEBI" id="CHEBI:58359"/>
    </ligand>
</feature>
<feature type="binding site" evidence="1">
    <location>
        <position position="257"/>
    </location>
    <ligand>
        <name>L-glutamine</name>
        <dbReference type="ChEBI" id="CHEBI:58359"/>
    </ligand>
</feature>
<feature type="binding site" evidence="1">
    <location>
        <position position="259"/>
    </location>
    <ligand>
        <name>L-glutamine</name>
        <dbReference type="ChEBI" id="CHEBI:58359"/>
    </ligand>
</feature>
<feature type="binding site" evidence="1">
    <location>
        <position position="287"/>
    </location>
    <ligand>
        <name>L-glutamine</name>
        <dbReference type="ChEBI" id="CHEBI:58359"/>
    </ligand>
</feature>
<feature type="binding site" evidence="1">
    <location>
        <position position="290"/>
    </location>
    <ligand>
        <name>L-glutamine</name>
        <dbReference type="ChEBI" id="CHEBI:58359"/>
    </ligand>
</feature>
<feature type="binding site" evidence="1">
    <location>
        <position position="328"/>
    </location>
    <ligand>
        <name>L-glutamine</name>
        <dbReference type="ChEBI" id="CHEBI:58359"/>
    </ligand>
</feature>
<feature type="binding site" evidence="1">
    <location>
        <position position="330"/>
    </location>
    <ligand>
        <name>L-glutamine</name>
        <dbReference type="ChEBI" id="CHEBI:58359"/>
    </ligand>
</feature>
<feature type="binding site" evidence="1">
    <location>
        <position position="331"/>
    </location>
    <ligand>
        <name>L-glutamine</name>
        <dbReference type="ChEBI" id="CHEBI:58359"/>
    </ligand>
</feature>